<dbReference type="EMBL" id="AE014297">
    <property type="protein sequence ID" value="AAF54989.1"/>
    <property type="molecule type" value="Genomic_DNA"/>
</dbReference>
<dbReference type="EMBL" id="AY069582">
    <property type="protein sequence ID" value="AAL39727.1"/>
    <property type="molecule type" value="mRNA"/>
</dbReference>
<dbReference type="RefSeq" id="NP_650316.1">
    <property type="nucleotide sequence ID" value="NM_142059.3"/>
</dbReference>
<dbReference type="SMR" id="Q9VFR1"/>
<dbReference type="BioGRID" id="66768">
    <property type="interactions" value="5"/>
</dbReference>
<dbReference type="FunCoup" id="Q9VFR1">
    <property type="interactions" value="853"/>
</dbReference>
<dbReference type="IntAct" id="Q9VFR1">
    <property type="interactions" value="1"/>
</dbReference>
<dbReference type="STRING" id="7227.FBpp0082297"/>
<dbReference type="PaxDb" id="7227-FBpp0082297"/>
<dbReference type="EnsemblMetazoa" id="FBtr0082829">
    <property type="protein sequence ID" value="FBpp0082297"/>
    <property type="gene ID" value="FBgn0260464"/>
</dbReference>
<dbReference type="GeneID" id="41689"/>
<dbReference type="KEGG" id="dme:Dmel_CG9288"/>
<dbReference type="UCSC" id="CG9288-RA">
    <property type="organism name" value="d. melanogaster"/>
</dbReference>
<dbReference type="AGR" id="FB:FBgn0260464"/>
<dbReference type="FlyBase" id="FBgn0260464">
    <property type="gene designation" value="CG9288"/>
</dbReference>
<dbReference type="VEuPathDB" id="VectorBase:FBgn0260464"/>
<dbReference type="eggNOG" id="KOG3266">
    <property type="taxonomic scope" value="Eukaryota"/>
</dbReference>
<dbReference type="GeneTree" id="ENSGT00450000040303"/>
<dbReference type="HOGENOM" id="CLU_107323_1_0_1"/>
<dbReference type="InParanoid" id="Q9VFR1"/>
<dbReference type="OMA" id="CIVHCED"/>
<dbReference type="OrthoDB" id="48130at2759"/>
<dbReference type="PhylomeDB" id="Q9VFR1"/>
<dbReference type="BioGRID-ORCS" id="41689">
    <property type="hits" value="1 hit in 1 CRISPR screen"/>
</dbReference>
<dbReference type="GenomeRNAi" id="41689"/>
<dbReference type="PRO" id="PR:Q9VFR1"/>
<dbReference type="Proteomes" id="UP000000803">
    <property type="component" value="Chromosome 3R"/>
</dbReference>
<dbReference type="Bgee" id="FBgn0260464">
    <property type="expression patterns" value="Expressed in larva and 12 other cell types or tissues"/>
</dbReference>
<dbReference type="GO" id="GO:0030425">
    <property type="term" value="C:dendrite"/>
    <property type="evidence" value="ECO:0000318"/>
    <property type="project" value="GO_Central"/>
</dbReference>
<dbReference type="GO" id="GO:0032433">
    <property type="term" value="C:filopodium tip"/>
    <property type="evidence" value="ECO:0000318"/>
    <property type="project" value="GO_Central"/>
</dbReference>
<dbReference type="GO" id="GO:0030027">
    <property type="term" value="C:lamellipodium"/>
    <property type="evidence" value="ECO:0000318"/>
    <property type="project" value="GO_Central"/>
</dbReference>
<dbReference type="GO" id="GO:0005634">
    <property type="term" value="C:nucleus"/>
    <property type="evidence" value="ECO:0000318"/>
    <property type="project" value="GO_Central"/>
</dbReference>
<dbReference type="GO" id="GO:0051015">
    <property type="term" value="F:actin filament binding"/>
    <property type="evidence" value="ECO:0000318"/>
    <property type="project" value="GO_Central"/>
</dbReference>
<dbReference type="GO" id="GO:0003785">
    <property type="term" value="F:actin monomer binding"/>
    <property type="evidence" value="ECO:0000318"/>
    <property type="project" value="GO_Central"/>
</dbReference>
<dbReference type="GO" id="GO:0048813">
    <property type="term" value="P:dendrite morphogenesis"/>
    <property type="evidence" value="ECO:0000318"/>
    <property type="project" value="GO_Central"/>
</dbReference>
<dbReference type="GO" id="GO:0030833">
    <property type="term" value="P:regulation of actin filament polymerization"/>
    <property type="evidence" value="ECO:0000318"/>
    <property type="project" value="GO_Central"/>
</dbReference>
<dbReference type="GO" id="GO:0051489">
    <property type="term" value="P:regulation of filopodium assembly"/>
    <property type="evidence" value="ECO:0000318"/>
    <property type="project" value="GO_Central"/>
</dbReference>
<dbReference type="Gene3D" id="2.40.50.100">
    <property type="match status" value="1"/>
</dbReference>
<dbReference type="InterPro" id="IPR039169">
    <property type="entry name" value="Abitram"/>
</dbReference>
<dbReference type="InterPro" id="IPR033753">
    <property type="entry name" value="GCV_H/Fam206"/>
</dbReference>
<dbReference type="InterPro" id="IPR011053">
    <property type="entry name" value="Single_hybrid_motif"/>
</dbReference>
<dbReference type="PANTHER" id="PTHR13651">
    <property type="entry name" value="PROTEIN ABITRAM"/>
    <property type="match status" value="1"/>
</dbReference>
<dbReference type="PANTHER" id="PTHR13651:SF0">
    <property type="entry name" value="PROTEIN ABITRAM"/>
    <property type="match status" value="1"/>
</dbReference>
<dbReference type="Pfam" id="PF01597">
    <property type="entry name" value="GCV_H"/>
    <property type="match status" value="1"/>
</dbReference>
<dbReference type="SUPFAM" id="SSF51230">
    <property type="entry name" value="Single hybrid motif"/>
    <property type="match status" value="1"/>
</dbReference>
<comment type="function">
    <text evidence="1">May regulate actin polymerization.</text>
</comment>
<comment type="similarity">
    <text evidence="3">Belongs to the ABITRAM family.</text>
</comment>
<gene>
    <name type="primary">abitram</name>
    <name type="ORF">CG9288</name>
</gene>
<evidence type="ECO:0000250" key="1">
    <source>
        <dbReference type="UniProtKB" id="Q80ZQ9"/>
    </source>
</evidence>
<evidence type="ECO:0000256" key="2">
    <source>
        <dbReference type="SAM" id="MobiDB-lite"/>
    </source>
</evidence>
<evidence type="ECO:0000305" key="3"/>
<proteinExistence type="evidence at transcript level"/>
<keyword id="KW-1185">Reference proteome</keyword>
<reference key="1">
    <citation type="journal article" date="2000" name="Science">
        <title>The genome sequence of Drosophila melanogaster.</title>
        <authorList>
            <person name="Adams M.D."/>
            <person name="Celniker S.E."/>
            <person name="Holt R.A."/>
            <person name="Evans C.A."/>
            <person name="Gocayne J.D."/>
            <person name="Amanatides P.G."/>
            <person name="Scherer S.E."/>
            <person name="Li P.W."/>
            <person name="Hoskins R.A."/>
            <person name="Galle R.F."/>
            <person name="George R.A."/>
            <person name="Lewis S.E."/>
            <person name="Richards S."/>
            <person name="Ashburner M."/>
            <person name="Henderson S.N."/>
            <person name="Sutton G.G."/>
            <person name="Wortman J.R."/>
            <person name="Yandell M.D."/>
            <person name="Zhang Q."/>
            <person name="Chen L.X."/>
            <person name="Brandon R.C."/>
            <person name="Rogers Y.-H.C."/>
            <person name="Blazej R.G."/>
            <person name="Champe M."/>
            <person name="Pfeiffer B.D."/>
            <person name="Wan K.H."/>
            <person name="Doyle C."/>
            <person name="Baxter E.G."/>
            <person name="Helt G."/>
            <person name="Nelson C.R."/>
            <person name="Miklos G.L.G."/>
            <person name="Abril J.F."/>
            <person name="Agbayani A."/>
            <person name="An H.-J."/>
            <person name="Andrews-Pfannkoch C."/>
            <person name="Baldwin D."/>
            <person name="Ballew R.M."/>
            <person name="Basu A."/>
            <person name="Baxendale J."/>
            <person name="Bayraktaroglu L."/>
            <person name="Beasley E.M."/>
            <person name="Beeson K.Y."/>
            <person name="Benos P.V."/>
            <person name="Berman B.P."/>
            <person name="Bhandari D."/>
            <person name="Bolshakov S."/>
            <person name="Borkova D."/>
            <person name="Botchan M.R."/>
            <person name="Bouck J."/>
            <person name="Brokstein P."/>
            <person name="Brottier P."/>
            <person name="Burtis K.C."/>
            <person name="Busam D.A."/>
            <person name="Butler H."/>
            <person name="Cadieu E."/>
            <person name="Center A."/>
            <person name="Chandra I."/>
            <person name="Cherry J.M."/>
            <person name="Cawley S."/>
            <person name="Dahlke C."/>
            <person name="Davenport L.B."/>
            <person name="Davies P."/>
            <person name="de Pablos B."/>
            <person name="Delcher A."/>
            <person name="Deng Z."/>
            <person name="Mays A.D."/>
            <person name="Dew I."/>
            <person name="Dietz S.M."/>
            <person name="Dodson K."/>
            <person name="Doup L.E."/>
            <person name="Downes M."/>
            <person name="Dugan-Rocha S."/>
            <person name="Dunkov B.C."/>
            <person name="Dunn P."/>
            <person name="Durbin K.J."/>
            <person name="Evangelista C.C."/>
            <person name="Ferraz C."/>
            <person name="Ferriera S."/>
            <person name="Fleischmann W."/>
            <person name="Fosler C."/>
            <person name="Gabrielian A.E."/>
            <person name="Garg N.S."/>
            <person name="Gelbart W.M."/>
            <person name="Glasser K."/>
            <person name="Glodek A."/>
            <person name="Gong F."/>
            <person name="Gorrell J.H."/>
            <person name="Gu Z."/>
            <person name="Guan P."/>
            <person name="Harris M."/>
            <person name="Harris N.L."/>
            <person name="Harvey D.A."/>
            <person name="Heiman T.J."/>
            <person name="Hernandez J.R."/>
            <person name="Houck J."/>
            <person name="Hostin D."/>
            <person name="Houston K.A."/>
            <person name="Howland T.J."/>
            <person name="Wei M.-H."/>
            <person name="Ibegwam C."/>
            <person name="Jalali M."/>
            <person name="Kalush F."/>
            <person name="Karpen G.H."/>
            <person name="Ke Z."/>
            <person name="Kennison J.A."/>
            <person name="Ketchum K.A."/>
            <person name="Kimmel B.E."/>
            <person name="Kodira C.D."/>
            <person name="Kraft C.L."/>
            <person name="Kravitz S."/>
            <person name="Kulp D."/>
            <person name="Lai Z."/>
            <person name="Lasko P."/>
            <person name="Lei Y."/>
            <person name="Levitsky A.A."/>
            <person name="Li J.H."/>
            <person name="Li Z."/>
            <person name="Liang Y."/>
            <person name="Lin X."/>
            <person name="Liu X."/>
            <person name="Mattei B."/>
            <person name="McIntosh T.C."/>
            <person name="McLeod M.P."/>
            <person name="McPherson D."/>
            <person name="Merkulov G."/>
            <person name="Milshina N.V."/>
            <person name="Mobarry C."/>
            <person name="Morris J."/>
            <person name="Moshrefi A."/>
            <person name="Mount S.M."/>
            <person name="Moy M."/>
            <person name="Murphy B."/>
            <person name="Murphy L."/>
            <person name="Muzny D.M."/>
            <person name="Nelson D.L."/>
            <person name="Nelson D.R."/>
            <person name="Nelson K.A."/>
            <person name="Nixon K."/>
            <person name="Nusskern D.R."/>
            <person name="Pacleb J.M."/>
            <person name="Palazzolo M."/>
            <person name="Pittman G.S."/>
            <person name="Pan S."/>
            <person name="Pollard J."/>
            <person name="Puri V."/>
            <person name="Reese M.G."/>
            <person name="Reinert K."/>
            <person name="Remington K."/>
            <person name="Saunders R.D.C."/>
            <person name="Scheeler F."/>
            <person name="Shen H."/>
            <person name="Shue B.C."/>
            <person name="Siden-Kiamos I."/>
            <person name="Simpson M."/>
            <person name="Skupski M.P."/>
            <person name="Smith T.J."/>
            <person name="Spier E."/>
            <person name="Spradling A.C."/>
            <person name="Stapleton M."/>
            <person name="Strong R."/>
            <person name="Sun E."/>
            <person name="Svirskas R."/>
            <person name="Tector C."/>
            <person name="Turner R."/>
            <person name="Venter E."/>
            <person name="Wang A.H."/>
            <person name="Wang X."/>
            <person name="Wang Z.-Y."/>
            <person name="Wassarman D.A."/>
            <person name="Weinstock G.M."/>
            <person name="Weissenbach J."/>
            <person name="Williams S.M."/>
            <person name="Woodage T."/>
            <person name="Worley K.C."/>
            <person name="Wu D."/>
            <person name="Yang S."/>
            <person name="Yao Q.A."/>
            <person name="Ye J."/>
            <person name="Yeh R.-F."/>
            <person name="Zaveri J.S."/>
            <person name="Zhan M."/>
            <person name="Zhang G."/>
            <person name="Zhao Q."/>
            <person name="Zheng L."/>
            <person name="Zheng X.H."/>
            <person name="Zhong F.N."/>
            <person name="Zhong W."/>
            <person name="Zhou X."/>
            <person name="Zhu S.C."/>
            <person name="Zhu X."/>
            <person name="Smith H.O."/>
            <person name="Gibbs R.A."/>
            <person name="Myers E.W."/>
            <person name="Rubin G.M."/>
            <person name="Venter J.C."/>
        </authorList>
    </citation>
    <scope>NUCLEOTIDE SEQUENCE [LARGE SCALE GENOMIC DNA]</scope>
    <source>
        <strain>Berkeley</strain>
    </source>
</reference>
<reference key="2">
    <citation type="journal article" date="2002" name="Genome Biol.">
        <title>Annotation of the Drosophila melanogaster euchromatic genome: a systematic review.</title>
        <authorList>
            <person name="Misra S."/>
            <person name="Crosby M.A."/>
            <person name="Mungall C.J."/>
            <person name="Matthews B.B."/>
            <person name="Campbell K.S."/>
            <person name="Hradecky P."/>
            <person name="Huang Y."/>
            <person name="Kaminker J.S."/>
            <person name="Millburn G.H."/>
            <person name="Prochnik S.E."/>
            <person name="Smith C.D."/>
            <person name="Tupy J.L."/>
            <person name="Whitfield E.J."/>
            <person name="Bayraktaroglu L."/>
            <person name="Berman B.P."/>
            <person name="Bettencourt B.R."/>
            <person name="Celniker S.E."/>
            <person name="de Grey A.D.N.J."/>
            <person name="Drysdale R.A."/>
            <person name="Harris N.L."/>
            <person name="Richter J."/>
            <person name="Russo S."/>
            <person name="Schroeder A.J."/>
            <person name="Shu S.Q."/>
            <person name="Stapleton M."/>
            <person name="Yamada C."/>
            <person name="Ashburner M."/>
            <person name="Gelbart W.M."/>
            <person name="Rubin G.M."/>
            <person name="Lewis S.E."/>
        </authorList>
    </citation>
    <scope>GENOME REANNOTATION</scope>
    <source>
        <strain>Berkeley</strain>
    </source>
</reference>
<reference key="3">
    <citation type="journal article" date="2002" name="Genome Biol.">
        <title>A Drosophila full-length cDNA resource.</title>
        <authorList>
            <person name="Stapleton M."/>
            <person name="Carlson J.W."/>
            <person name="Brokstein P."/>
            <person name="Yu C."/>
            <person name="Champe M."/>
            <person name="George R.A."/>
            <person name="Guarin H."/>
            <person name="Kronmiller B."/>
            <person name="Pacleb J.M."/>
            <person name="Park S."/>
            <person name="Wan K.H."/>
            <person name="Rubin G.M."/>
            <person name="Celniker S.E."/>
        </authorList>
    </citation>
    <scope>NUCLEOTIDE SEQUENCE [LARGE SCALE MRNA]</scope>
    <source>
        <strain>Berkeley</strain>
        <tissue>Embryo</tissue>
    </source>
</reference>
<protein>
    <recommendedName>
        <fullName evidence="3">Protein Abitram</fullName>
    </recommendedName>
    <alternativeName>
        <fullName>Actin-binding transcription modulator</fullName>
    </alternativeName>
</protein>
<accession>Q9VFR1</accession>
<organism>
    <name type="scientific">Drosophila melanogaster</name>
    <name type="common">Fruit fly</name>
    <dbReference type="NCBI Taxonomy" id="7227"/>
    <lineage>
        <taxon>Eukaryota</taxon>
        <taxon>Metazoa</taxon>
        <taxon>Ecdysozoa</taxon>
        <taxon>Arthropoda</taxon>
        <taxon>Hexapoda</taxon>
        <taxon>Insecta</taxon>
        <taxon>Pterygota</taxon>
        <taxon>Neoptera</taxon>
        <taxon>Endopterygota</taxon>
        <taxon>Diptera</taxon>
        <taxon>Brachycera</taxon>
        <taxon>Muscomorpha</taxon>
        <taxon>Ephydroidea</taxon>
        <taxon>Drosophilidae</taxon>
        <taxon>Drosophila</taxon>
        <taxon>Sophophora</taxon>
    </lineage>
</organism>
<sequence>MSVQADDPLEPFYFEHEEQEICGKLVAPITDSFQEDYPSVVDRFFTRYYYFKGDVPYQVLYHSNRICLICLAPEHPALAQGISSVNFDIGNVDRSQNVVKGKGKKGGMILQAESTLALLTTANGGTYKVPSCIRGKLVEVNTAIVEEPKLLEQLPEGAGYFAILLPKIENCDAIKASLLTQEQYEERLKSKNEGLPQIESTGDHAQNKNKEIQA</sequence>
<name>ABITM_DROME</name>
<feature type="chain" id="PRO_0000291935" description="Protein Abitram">
    <location>
        <begin position="1"/>
        <end position="214"/>
    </location>
</feature>
<feature type="region of interest" description="Disordered" evidence="2">
    <location>
        <begin position="189"/>
        <end position="214"/>
    </location>
</feature>
<feature type="compositionally biased region" description="Basic and acidic residues" evidence="2">
    <location>
        <begin position="201"/>
        <end position="214"/>
    </location>
</feature>